<comment type="function">
    <text evidence="1">Specifically methylates the guanine in position 2445 (m2G2445) and the guanine in position 2069 (m7G2069) of 23S rRNA.</text>
</comment>
<comment type="catalytic activity">
    <reaction evidence="1">
        <text>guanosine(2445) in 23S rRNA + S-adenosyl-L-methionine = N(2)-methylguanosine(2445) in 23S rRNA + S-adenosyl-L-homocysteine + H(+)</text>
        <dbReference type="Rhea" id="RHEA:42740"/>
        <dbReference type="Rhea" id="RHEA-COMP:10215"/>
        <dbReference type="Rhea" id="RHEA-COMP:10216"/>
        <dbReference type="ChEBI" id="CHEBI:15378"/>
        <dbReference type="ChEBI" id="CHEBI:57856"/>
        <dbReference type="ChEBI" id="CHEBI:59789"/>
        <dbReference type="ChEBI" id="CHEBI:74269"/>
        <dbReference type="ChEBI" id="CHEBI:74481"/>
        <dbReference type="EC" id="2.1.1.173"/>
    </reaction>
</comment>
<comment type="catalytic activity">
    <reaction evidence="1">
        <text>guanosine(2069) in 23S rRNA + S-adenosyl-L-methionine = N(2)-methylguanosine(2069) in 23S rRNA + S-adenosyl-L-homocysteine + H(+)</text>
        <dbReference type="Rhea" id="RHEA:43772"/>
        <dbReference type="Rhea" id="RHEA-COMP:10688"/>
        <dbReference type="Rhea" id="RHEA-COMP:10689"/>
        <dbReference type="ChEBI" id="CHEBI:15378"/>
        <dbReference type="ChEBI" id="CHEBI:57856"/>
        <dbReference type="ChEBI" id="CHEBI:59789"/>
        <dbReference type="ChEBI" id="CHEBI:74269"/>
        <dbReference type="ChEBI" id="CHEBI:74481"/>
        <dbReference type="EC" id="2.1.1.264"/>
    </reaction>
</comment>
<comment type="subcellular location">
    <subcellularLocation>
        <location evidence="1">Cytoplasm</location>
    </subcellularLocation>
</comment>
<comment type="similarity">
    <text evidence="1">Belongs to the methyltransferase superfamily. RlmKL family.</text>
</comment>
<organism>
    <name type="scientific">Xanthomonas oryzae pv. oryzae (strain MAFF 311018)</name>
    <dbReference type="NCBI Taxonomy" id="342109"/>
    <lineage>
        <taxon>Bacteria</taxon>
        <taxon>Pseudomonadati</taxon>
        <taxon>Pseudomonadota</taxon>
        <taxon>Gammaproteobacteria</taxon>
        <taxon>Lysobacterales</taxon>
        <taxon>Lysobacteraceae</taxon>
        <taxon>Xanthomonas</taxon>
    </lineage>
</organism>
<proteinExistence type="inferred from homology"/>
<keyword id="KW-0963">Cytoplasm</keyword>
<keyword id="KW-0489">Methyltransferase</keyword>
<keyword id="KW-0694">RNA-binding</keyword>
<keyword id="KW-0698">rRNA processing</keyword>
<keyword id="KW-0949">S-adenosyl-L-methionine</keyword>
<keyword id="KW-0808">Transferase</keyword>
<feature type="chain" id="PRO_0000366859" description="Ribosomal RNA large subunit methyltransferase K/L">
    <location>
        <begin position="1"/>
        <end position="711"/>
    </location>
</feature>
<feature type="domain" description="THUMP" evidence="1">
    <location>
        <begin position="42"/>
        <end position="153"/>
    </location>
</feature>
<gene>
    <name evidence="1" type="primary">rlmL</name>
    <name type="ordered locus">XOO2313</name>
</gene>
<evidence type="ECO:0000255" key="1">
    <source>
        <dbReference type="HAMAP-Rule" id="MF_01858"/>
    </source>
</evidence>
<reference key="1">
    <citation type="journal article" date="2005" name="Jpn. Agric. Res. Q.">
        <title>Genome sequence of Xanthomonas oryzae pv. oryzae suggests contribution of large numbers of effector genes and insertion sequences to its race diversity.</title>
        <authorList>
            <person name="Ochiai H."/>
            <person name="Inoue Y."/>
            <person name="Takeya M."/>
            <person name="Sasaki A."/>
            <person name="Kaku H."/>
        </authorList>
    </citation>
    <scope>NUCLEOTIDE SEQUENCE [LARGE SCALE GENOMIC DNA]</scope>
    <source>
        <strain>MAFF 311018</strain>
    </source>
</reference>
<accession>Q2P309</accession>
<protein>
    <recommendedName>
        <fullName evidence="1">Ribosomal RNA large subunit methyltransferase K/L</fullName>
    </recommendedName>
    <domain>
        <recommendedName>
            <fullName evidence="1">23S rRNA m2G2445 methyltransferase</fullName>
            <ecNumber evidence="1">2.1.1.173</ecNumber>
        </recommendedName>
        <alternativeName>
            <fullName evidence="1">rRNA (guanine-N(2)-)-methyltransferase RlmL</fullName>
        </alternativeName>
    </domain>
    <domain>
        <recommendedName>
            <fullName evidence="1">23S rRNA m7G2069 methyltransferase</fullName>
            <ecNumber evidence="1">2.1.1.264</ecNumber>
        </recommendedName>
        <alternativeName>
            <fullName evidence="1">rRNA (guanine-N(7)-)-methyltransferase RlmK</fullName>
        </alternativeName>
    </domain>
</protein>
<sequence length="711" mass="78145">MKFFASCAKGLEYLLADELLALGASKATATISGVNVEGELRDAQRAVLWSRLASRVLWPLSEFDCPDEDALYAGVAELPWDAHLSVGHTLSVDAHVSGTAITHARYAAQRIKDAVVDTMRRQGLERPSVDVESPDLRLNLSLRKGRATISVDLGGGPLHRRGWRMAQNEAPLKENLAAAVLMRGGWPRAYADGGGLLDPMCGSGTLLIEGALMAADVAPGLQRYGSDLPSRWRGFDRNGWQQLVSEARERDSVGRAALKQVIHGSDMDPHAIRAAKENAQVAGVAEAIWFGVCEVGELQTPPQATGVVVCNPPYDERLAADAALYRRLGDTLQCAVPQWRASLLCGNAELAYATGLRAGKKYQLFNGAIECALIVCDPIAVPRRTPLAAPTALSEGAQMVANRLRKNLQKFKKWRAREGVECFRAYDADLPEYSAAIDVYQQADGDRRIFLHVQEYAAPATIPEADVRRRLNELLAAAREVFEVPAERVALKSRERGKGGSKYGRFEQRNEIVHVREHGALLRVNLFDYLDTGLFLDHRPLRGTMAQQSRGRRFLNLFCYTGVASVEAAVAGAASTTSVDLSGTYLQWCADNLALNGLAGSKHKLVQADALAWLEAERAHFDVIFCDPPTFSNSARAEDFDIQRAHVRLLRAAVARLAPGGVLYFSNNFRRFKLDEEGVAEFAQCEDISPRTIDPDFERHARIHRAWRLTA</sequence>
<dbReference type="EC" id="2.1.1.173" evidence="1"/>
<dbReference type="EC" id="2.1.1.264" evidence="1"/>
<dbReference type="EMBL" id="AP008229">
    <property type="protein sequence ID" value="BAE69068.1"/>
    <property type="molecule type" value="Genomic_DNA"/>
</dbReference>
<dbReference type="SMR" id="Q2P309"/>
<dbReference type="KEGG" id="xom:XOO2313"/>
<dbReference type="HOGENOM" id="CLU_014042_2_0_6"/>
<dbReference type="GO" id="GO:0005737">
    <property type="term" value="C:cytoplasm"/>
    <property type="evidence" value="ECO:0007669"/>
    <property type="project" value="UniProtKB-SubCell"/>
</dbReference>
<dbReference type="GO" id="GO:0052915">
    <property type="term" value="F:23S rRNA (guanine(2445)-N(2))-methyltransferase activity"/>
    <property type="evidence" value="ECO:0007669"/>
    <property type="project" value="UniProtKB-UniRule"/>
</dbReference>
<dbReference type="GO" id="GO:0003723">
    <property type="term" value="F:RNA binding"/>
    <property type="evidence" value="ECO:0007669"/>
    <property type="project" value="UniProtKB-KW"/>
</dbReference>
<dbReference type="GO" id="GO:0070043">
    <property type="term" value="F:rRNA (guanine-N7-)-methyltransferase activity"/>
    <property type="evidence" value="ECO:0007669"/>
    <property type="project" value="UniProtKB-UniRule"/>
</dbReference>
<dbReference type="CDD" id="cd02440">
    <property type="entry name" value="AdoMet_MTases"/>
    <property type="match status" value="1"/>
</dbReference>
<dbReference type="CDD" id="cd11715">
    <property type="entry name" value="THUMP_AdoMetMT"/>
    <property type="match status" value="1"/>
</dbReference>
<dbReference type="FunFam" id="3.30.750.80:FF:000003">
    <property type="entry name" value="Ribosomal RNA large subunit methyltransferase K/L"/>
    <property type="match status" value="1"/>
</dbReference>
<dbReference type="Gene3D" id="3.30.2130.30">
    <property type="match status" value="1"/>
</dbReference>
<dbReference type="Gene3D" id="3.30.750.80">
    <property type="entry name" value="RNA methyltransferase domain (HRMD) like"/>
    <property type="match status" value="1"/>
</dbReference>
<dbReference type="Gene3D" id="3.40.50.150">
    <property type="entry name" value="Vaccinia Virus protein VP39"/>
    <property type="match status" value="2"/>
</dbReference>
<dbReference type="HAMAP" id="MF_01858">
    <property type="entry name" value="23SrRNA_methyltr_KL"/>
    <property type="match status" value="1"/>
</dbReference>
<dbReference type="InterPro" id="IPR017244">
    <property type="entry name" value="23SrRNA_methyltr_KL"/>
</dbReference>
<dbReference type="InterPro" id="IPR002052">
    <property type="entry name" value="DNA_methylase_N6_adenine_CS"/>
</dbReference>
<dbReference type="InterPro" id="IPR000241">
    <property type="entry name" value="RlmKL-like_Mtase"/>
</dbReference>
<dbReference type="InterPro" id="IPR053943">
    <property type="entry name" value="RlmKL-like_Mtase_CS"/>
</dbReference>
<dbReference type="InterPro" id="IPR054170">
    <property type="entry name" value="RlmL_1st"/>
</dbReference>
<dbReference type="InterPro" id="IPR019614">
    <property type="entry name" value="SAM-dep_methyl-trfase"/>
</dbReference>
<dbReference type="InterPro" id="IPR029063">
    <property type="entry name" value="SAM-dependent_MTases_sf"/>
</dbReference>
<dbReference type="InterPro" id="IPR004114">
    <property type="entry name" value="THUMP_dom"/>
</dbReference>
<dbReference type="NCBIfam" id="NF008748">
    <property type="entry name" value="PRK11783.1"/>
    <property type="match status" value="1"/>
</dbReference>
<dbReference type="PANTHER" id="PTHR47313">
    <property type="entry name" value="RIBOSOMAL RNA LARGE SUBUNIT METHYLTRANSFERASE K/L"/>
    <property type="match status" value="1"/>
</dbReference>
<dbReference type="PANTHER" id="PTHR47313:SF1">
    <property type="entry name" value="RIBOSOMAL RNA LARGE SUBUNIT METHYLTRANSFERASE K_L"/>
    <property type="match status" value="1"/>
</dbReference>
<dbReference type="Pfam" id="PF10672">
    <property type="entry name" value="Methyltrans_SAM"/>
    <property type="match status" value="1"/>
</dbReference>
<dbReference type="Pfam" id="PF22020">
    <property type="entry name" value="RlmL_1st"/>
    <property type="match status" value="1"/>
</dbReference>
<dbReference type="Pfam" id="PF02926">
    <property type="entry name" value="THUMP"/>
    <property type="match status" value="1"/>
</dbReference>
<dbReference type="Pfam" id="PF01170">
    <property type="entry name" value="UPF0020"/>
    <property type="match status" value="1"/>
</dbReference>
<dbReference type="PIRSF" id="PIRSF037618">
    <property type="entry name" value="RNA_Mtase_bacteria_prd"/>
    <property type="match status" value="1"/>
</dbReference>
<dbReference type="SMART" id="SM00981">
    <property type="entry name" value="THUMP"/>
    <property type="match status" value="1"/>
</dbReference>
<dbReference type="SUPFAM" id="SSF53335">
    <property type="entry name" value="S-adenosyl-L-methionine-dependent methyltransferases"/>
    <property type="match status" value="2"/>
</dbReference>
<dbReference type="PROSITE" id="PS51165">
    <property type="entry name" value="THUMP"/>
    <property type="match status" value="1"/>
</dbReference>
<dbReference type="PROSITE" id="PS01261">
    <property type="entry name" value="UPF0020"/>
    <property type="match status" value="1"/>
</dbReference>
<name>RLMKL_XANOM</name>